<keyword id="KW-0408">Iron</keyword>
<keyword id="KW-0464">Manganese</keyword>
<keyword id="KW-0479">Metal-binding</keyword>
<keyword id="KW-0560">Oxidoreductase</keyword>
<keyword id="KW-1185">Reference proteome</keyword>
<keyword id="KW-0346">Stress response</keyword>
<evidence type="ECO:0000250" key="1"/>
<evidence type="ECO:0000250" key="2">
    <source>
        <dbReference type="UniProtKB" id="P80293"/>
    </source>
</evidence>
<evidence type="ECO:0000305" key="3"/>
<protein>
    <recommendedName>
        <fullName>Superoxide dismutase [Mn/Fe]</fullName>
        <ecNumber evidence="2">1.15.1.1</ecNumber>
    </recommendedName>
</protein>
<organism>
    <name type="scientific">Staphylococcus epidermidis (strain ATCC 35984 / DSM 28319 / BCRC 17069 / CCUG 31568 / BM 3577 / RP62A)</name>
    <dbReference type="NCBI Taxonomy" id="176279"/>
    <lineage>
        <taxon>Bacteria</taxon>
        <taxon>Bacillati</taxon>
        <taxon>Bacillota</taxon>
        <taxon>Bacilli</taxon>
        <taxon>Bacillales</taxon>
        <taxon>Staphylococcaceae</taxon>
        <taxon>Staphylococcus</taxon>
    </lineage>
</organism>
<reference key="1">
    <citation type="journal article" date="2005" name="J. Bacteriol.">
        <title>Insights on evolution of virulence and resistance from the complete genome analysis of an early methicillin-resistant Staphylococcus aureus strain and a biofilm-producing methicillin-resistant Staphylococcus epidermidis strain.</title>
        <authorList>
            <person name="Gill S.R."/>
            <person name="Fouts D.E."/>
            <person name="Archer G.L."/>
            <person name="Mongodin E.F."/>
            <person name="DeBoy R.T."/>
            <person name="Ravel J."/>
            <person name="Paulsen I.T."/>
            <person name="Kolonay J.F."/>
            <person name="Brinkac L.M."/>
            <person name="Beanan M.J."/>
            <person name="Dodson R.J."/>
            <person name="Daugherty S.C."/>
            <person name="Madupu R."/>
            <person name="Angiuoli S.V."/>
            <person name="Durkin A.S."/>
            <person name="Haft D.H."/>
            <person name="Vamathevan J.J."/>
            <person name="Khouri H."/>
            <person name="Utterback T.R."/>
            <person name="Lee C."/>
            <person name="Dimitrov G."/>
            <person name="Jiang L."/>
            <person name="Qin H."/>
            <person name="Weidman J."/>
            <person name="Tran K."/>
            <person name="Kang K.H."/>
            <person name="Hance I.R."/>
            <person name="Nelson K.E."/>
            <person name="Fraser C.M."/>
        </authorList>
    </citation>
    <scope>NUCLEOTIDE SEQUENCE [LARGE SCALE GENOMIC DNA]</scope>
    <source>
        <strain>ATCC 35984 / DSM 28319 / BCRC 17069 / CCUG 31568 / BM 3577 / RP62A</strain>
    </source>
</reference>
<proteinExistence type="inferred from homology"/>
<comment type="function">
    <text evidence="2">Destroys superoxide anion radicals which are normally produced within the cells and which are toxic to biological systems. Catalyzes the dismutation of superoxide anion radicals into O2 and H2O2 by successive reduction and oxidation of the transition metal ion at the active site.</text>
</comment>
<comment type="catalytic activity">
    <reaction evidence="2">
        <text>2 superoxide + 2 H(+) = H2O2 + O2</text>
        <dbReference type="Rhea" id="RHEA:20696"/>
        <dbReference type="ChEBI" id="CHEBI:15378"/>
        <dbReference type="ChEBI" id="CHEBI:15379"/>
        <dbReference type="ChEBI" id="CHEBI:16240"/>
        <dbReference type="ChEBI" id="CHEBI:18421"/>
        <dbReference type="EC" id="1.15.1.1"/>
    </reaction>
    <physiologicalReaction direction="left-to-right" evidence="2">
        <dbReference type="Rhea" id="RHEA:20697"/>
    </physiologicalReaction>
</comment>
<comment type="cofactor">
    <cofactor evidence="2">
        <name>Mn(2+)</name>
        <dbReference type="ChEBI" id="CHEBI:29035"/>
    </cofactor>
    <cofactor evidence="2">
        <name>Fe(3+)</name>
        <dbReference type="ChEBI" id="CHEBI:29034"/>
    </cofactor>
    <text evidence="2">Binds 1 Mn(2+) or Fe(3+) ion per subunit.</text>
</comment>
<comment type="subunit">
    <text evidence="1">Homodimer.</text>
</comment>
<comment type="similarity">
    <text evidence="3">Belongs to the iron/manganese superoxide dismutase family.</text>
</comment>
<feature type="chain" id="PRO_0000160078" description="Superoxide dismutase [Mn/Fe]">
    <location>
        <begin position="1"/>
        <end position="199"/>
    </location>
</feature>
<feature type="binding site" evidence="2">
    <location>
        <position position="27"/>
    </location>
    <ligand>
        <name>Fe(3+)</name>
        <dbReference type="ChEBI" id="CHEBI:29034"/>
    </ligand>
</feature>
<feature type="binding site" evidence="2">
    <location>
        <position position="27"/>
    </location>
    <ligand>
        <name>Mn(2+)</name>
        <dbReference type="ChEBI" id="CHEBI:29035"/>
    </ligand>
</feature>
<feature type="binding site" evidence="2">
    <location>
        <position position="81"/>
    </location>
    <ligand>
        <name>Fe(3+)</name>
        <dbReference type="ChEBI" id="CHEBI:29034"/>
    </ligand>
</feature>
<feature type="binding site" evidence="2">
    <location>
        <position position="81"/>
    </location>
    <ligand>
        <name>Mn(2+)</name>
        <dbReference type="ChEBI" id="CHEBI:29035"/>
    </ligand>
</feature>
<feature type="binding site" evidence="2">
    <location>
        <position position="161"/>
    </location>
    <ligand>
        <name>Fe(3+)</name>
        <dbReference type="ChEBI" id="CHEBI:29034"/>
    </ligand>
</feature>
<feature type="binding site" evidence="2">
    <location>
        <position position="161"/>
    </location>
    <ligand>
        <name>Mn(2+)</name>
        <dbReference type="ChEBI" id="CHEBI:29035"/>
    </ligand>
</feature>
<feature type="binding site" evidence="2">
    <location>
        <position position="165"/>
    </location>
    <ligand>
        <name>Fe(3+)</name>
        <dbReference type="ChEBI" id="CHEBI:29034"/>
    </ligand>
</feature>
<feature type="binding site" evidence="2">
    <location>
        <position position="165"/>
    </location>
    <ligand>
        <name>Mn(2+)</name>
        <dbReference type="ChEBI" id="CHEBI:29035"/>
    </ligand>
</feature>
<dbReference type="EC" id="1.15.1.1" evidence="2"/>
<dbReference type="EMBL" id="CP000029">
    <property type="protein sequence ID" value="AAW54532.1"/>
    <property type="molecule type" value="Genomic_DNA"/>
</dbReference>
<dbReference type="RefSeq" id="WP_001831217.1">
    <property type="nucleotide sequence ID" value="NC_002976.3"/>
</dbReference>
<dbReference type="SMR" id="Q5HNZ5"/>
<dbReference type="STRING" id="176279.SERP1119"/>
<dbReference type="KEGG" id="ser:SERP1119"/>
<dbReference type="eggNOG" id="COG0605">
    <property type="taxonomic scope" value="Bacteria"/>
</dbReference>
<dbReference type="HOGENOM" id="CLU_031625_0_1_9"/>
<dbReference type="Proteomes" id="UP000000531">
    <property type="component" value="Chromosome"/>
</dbReference>
<dbReference type="GO" id="GO:0005737">
    <property type="term" value="C:cytoplasm"/>
    <property type="evidence" value="ECO:0007669"/>
    <property type="project" value="TreeGrafter"/>
</dbReference>
<dbReference type="GO" id="GO:0046872">
    <property type="term" value="F:metal ion binding"/>
    <property type="evidence" value="ECO:0007669"/>
    <property type="project" value="UniProtKB-KW"/>
</dbReference>
<dbReference type="GO" id="GO:0004784">
    <property type="term" value="F:superoxide dismutase activity"/>
    <property type="evidence" value="ECO:0007669"/>
    <property type="project" value="UniProtKB-EC"/>
</dbReference>
<dbReference type="FunFam" id="1.10.287.990:FF:000001">
    <property type="entry name" value="Superoxide dismutase"/>
    <property type="match status" value="1"/>
</dbReference>
<dbReference type="FunFam" id="3.55.40.20:FF:000001">
    <property type="entry name" value="Superoxide dismutase"/>
    <property type="match status" value="1"/>
</dbReference>
<dbReference type="Gene3D" id="1.10.287.990">
    <property type="entry name" value="Fe,Mn superoxide dismutase (SOD) domain"/>
    <property type="match status" value="1"/>
</dbReference>
<dbReference type="Gene3D" id="3.55.40.20">
    <property type="entry name" value="Iron/manganese superoxide dismutase, C-terminal domain"/>
    <property type="match status" value="1"/>
</dbReference>
<dbReference type="InterPro" id="IPR001189">
    <property type="entry name" value="Mn/Fe_SOD"/>
</dbReference>
<dbReference type="InterPro" id="IPR019833">
    <property type="entry name" value="Mn/Fe_SOD_BS"/>
</dbReference>
<dbReference type="InterPro" id="IPR019832">
    <property type="entry name" value="Mn/Fe_SOD_C"/>
</dbReference>
<dbReference type="InterPro" id="IPR019831">
    <property type="entry name" value="Mn/Fe_SOD_N"/>
</dbReference>
<dbReference type="InterPro" id="IPR036324">
    <property type="entry name" value="Mn/Fe_SOD_N_sf"/>
</dbReference>
<dbReference type="InterPro" id="IPR036314">
    <property type="entry name" value="SOD_C_sf"/>
</dbReference>
<dbReference type="PANTHER" id="PTHR43595">
    <property type="entry name" value="37S RIBOSOMAL PROTEIN S26, MITOCHONDRIAL"/>
    <property type="match status" value="1"/>
</dbReference>
<dbReference type="PANTHER" id="PTHR43595:SF2">
    <property type="entry name" value="SMALL RIBOSOMAL SUBUNIT PROTEIN MS42"/>
    <property type="match status" value="1"/>
</dbReference>
<dbReference type="Pfam" id="PF02777">
    <property type="entry name" value="Sod_Fe_C"/>
    <property type="match status" value="1"/>
</dbReference>
<dbReference type="Pfam" id="PF00081">
    <property type="entry name" value="Sod_Fe_N"/>
    <property type="match status" value="1"/>
</dbReference>
<dbReference type="PIRSF" id="PIRSF000349">
    <property type="entry name" value="SODismutase"/>
    <property type="match status" value="1"/>
</dbReference>
<dbReference type="PRINTS" id="PR01703">
    <property type="entry name" value="MNSODISMTASE"/>
</dbReference>
<dbReference type="SUPFAM" id="SSF54719">
    <property type="entry name" value="Fe,Mn superoxide dismutase (SOD), C-terminal domain"/>
    <property type="match status" value="1"/>
</dbReference>
<dbReference type="SUPFAM" id="SSF46609">
    <property type="entry name" value="Fe,Mn superoxide dismutase (SOD), N-terminal domain"/>
    <property type="match status" value="1"/>
</dbReference>
<dbReference type="PROSITE" id="PS00088">
    <property type="entry name" value="SOD_MN"/>
    <property type="match status" value="1"/>
</dbReference>
<name>SODM_STAEQ</name>
<sequence length="199" mass="22722">MAFELPNLPYAYDALEPHIDKQTMEIHHDKHHNTYVTKLNSAVEGTDLEAKSIEEIVANLDSVPSNIQTAVRNNGGGHLNHSLFWELLSPNSEEKGEVVDKIKEQWGSLDEFKKEFADKAAARFGSGWAWLVVNNGQLEIVTTPNQDNPITEGKTPILGLDVWEHAYYLKYQNKRPDYINAFWNVVNWEKVNELYNATK</sequence>
<accession>Q5HNZ5</accession>
<gene>
    <name type="primary">sodA</name>
    <name type="ordered locus">SERP1119</name>
</gene>